<gene>
    <name type="primary">SNU13</name>
    <name type="ordered locus">CAGL0I03234g</name>
</gene>
<accession>Q6FQV5</accession>
<keyword id="KW-0507">mRNA processing</keyword>
<keyword id="KW-0508">mRNA splicing</keyword>
<keyword id="KW-0539">Nucleus</keyword>
<keyword id="KW-1185">Reference proteome</keyword>
<keyword id="KW-0687">Ribonucleoprotein</keyword>
<keyword id="KW-0690">Ribosome biogenesis</keyword>
<keyword id="KW-0694">RNA-binding</keyword>
<keyword id="KW-0698">rRNA processing</keyword>
<keyword id="KW-0747">Spliceosome</keyword>
<feature type="chain" id="PRO_0000290658" description="13 kDa ribonucleoprotein-associated protein">
    <location>
        <begin position="1"/>
        <end position="126"/>
    </location>
</feature>
<evidence type="ECO:0000250" key="1"/>
<evidence type="ECO:0000305" key="2"/>
<name>SNU13_CANGA</name>
<protein>
    <recommendedName>
        <fullName>13 kDa ribonucleoprotein-associated protein</fullName>
    </recommendedName>
</protein>
<dbReference type="EMBL" id="CR380955">
    <property type="protein sequence ID" value="CAG60326.1"/>
    <property type="molecule type" value="Genomic_DNA"/>
</dbReference>
<dbReference type="RefSeq" id="XP_447389.1">
    <property type="nucleotide sequence ID" value="XM_447389.1"/>
</dbReference>
<dbReference type="SMR" id="Q6FQV5"/>
<dbReference type="FunCoup" id="Q6FQV5">
    <property type="interactions" value="1398"/>
</dbReference>
<dbReference type="STRING" id="284593.Q6FQV5"/>
<dbReference type="EnsemblFungi" id="CAGL0I03234g-T">
    <property type="protein sequence ID" value="CAGL0I03234g-T-p1"/>
    <property type="gene ID" value="CAGL0I03234g"/>
</dbReference>
<dbReference type="KEGG" id="cgr:2889170"/>
<dbReference type="CGD" id="CAL0132644">
    <property type="gene designation" value="CAGL0I03234g"/>
</dbReference>
<dbReference type="VEuPathDB" id="FungiDB:B1J91_I03234g"/>
<dbReference type="VEuPathDB" id="FungiDB:CAGL0I03234g"/>
<dbReference type="eggNOG" id="KOG3387">
    <property type="taxonomic scope" value="Eukaryota"/>
</dbReference>
<dbReference type="HOGENOM" id="CLU_084513_4_1_1"/>
<dbReference type="InParanoid" id="Q6FQV5"/>
<dbReference type="OMA" id="IKNQIYA"/>
<dbReference type="Proteomes" id="UP000002428">
    <property type="component" value="Chromosome I"/>
</dbReference>
<dbReference type="GO" id="GO:0031428">
    <property type="term" value="C:box C/D methylation guide snoRNP complex"/>
    <property type="evidence" value="ECO:0007669"/>
    <property type="project" value="EnsemblFungi"/>
</dbReference>
<dbReference type="GO" id="GO:0005730">
    <property type="term" value="C:nucleolus"/>
    <property type="evidence" value="ECO:0007669"/>
    <property type="project" value="UniProtKB-SubCell"/>
</dbReference>
<dbReference type="GO" id="GO:0032040">
    <property type="term" value="C:small-subunit processome"/>
    <property type="evidence" value="ECO:0007669"/>
    <property type="project" value="EnsemblFungi"/>
</dbReference>
<dbReference type="GO" id="GO:0005681">
    <property type="term" value="C:spliceosomal complex"/>
    <property type="evidence" value="ECO:0007669"/>
    <property type="project" value="UniProtKB-KW"/>
</dbReference>
<dbReference type="GO" id="GO:0046540">
    <property type="term" value="C:U4/U6 x U5 tri-snRNP complex"/>
    <property type="evidence" value="ECO:0007669"/>
    <property type="project" value="EnsemblFungi"/>
</dbReference>
<dbReference type="GO" id="GO:0034511">
    <property type="term" value="F:U3 snoRNA binding"/>
    <property type="evidence" value="ECO:0007669"/>
    <property type="project" value="EnsemblFungi"/>
</dbReference>
<dbReference type="GO" id="GO:0030621">
    <property type="term" value="F:U4 snRNA binding"/>
    <property type="evidence" value="ECO:0007669"/>
    <property type="project" value="EnsemblFungi"/>
</dbReference>
<dbReference type="GO" id="GO:0000494">
    <property type="term" value="P:box C/D sno(s)RNA 3'-end processing"/>
    <property type="evidence" value="ECO:0007669"/>
    <property type="project" value="EnsemblFungi"/>
</dbReference>
<dbReference type="GO" id="GO:0000462">
    <property type="term" value="P:maturation of SSU-rRNA from tricistronic rRNA transcript (SSU-rRNA, 5.8S rRNA, LSU-rRNA)"/>
    <property type="evidence" value="ECO:0007669"/>
    <property type="project" value="EnsemblFungi"/>
</dbReference>
<dbReference type="GO" id="GO:0000398">
    <property type="term" value="P:mRNA splicing, via spliceosome"/>
    <property type="evidence" value="ECO:0007669"/>
    <property type="project" value="EnsemblFungi"/>
</dbReference>
<dbReference type="GO" id="GO:0000452">
    <property type="term" value="P:snoRNA guided rRNA 2'-O-methylation"/>
    <property type="evidence" value="ECO:0007669"/>
    <property type="project" value="EnsemblFungi"/>
</dbReference>
<dbReference type="CDD" id="cd21104">
    <property type="entry name" value="SNU13"/>
    <property type="match status" value="1"/>
</dbReference>
<dbReference type="FunFam" id="3.30.1330.30:FF:000002">
    <property type="entry name" value="NHP2-like protein 1 homolog"/>
    <property type="match status" value="1"/>
</dbReference>
<dbReference type="Gene3D" id="3.30.1330.30">
    <property type="match status" value="1"/>
</dbReference>
<dbReference type="InterPro" id="IPR050257">
    <property type="entry name" value="eL8/uL1-like"/>
</dbReference>
<dbReference type="InterPro" id="IPR002415">
    <property type="entry name" value="H/ACA_rnp_Nhp2-like"/>
</dbReference>
<dbReference type="InterPro" id="IPR029064">
    <property type="entry name" value="Ribosomal_eL30-like_sf"/>
</dbReference>
<dbReference type="InterPro" id="IPR004037">
    <property type="entry name" value="Ribosomal_eL8-like_CS"/>
</dbReference>
<dbReference type="InterPro" id="IPR004038">
    <property type="entry name" value="Ribosomal_eL8/eL30/eS12/Gad45"/>
</dbReference>
<dbReference type="InterPro" id="IPR018492">
    <property type="entry name" value="Ribosomal_eL8/Nhp2"/>
</dbReference>
<dbReference type="PANTHER" id="PTHR23105">
    <property type="entry name" value="RIBOSOMAL PROTEIN L7AE FAMILY MEMBER"/>
    <property type="match status" value="1"/>
</dbReference>
<dbReference type="Pfam" id="PF01248">
    <property type="entry name" value="Ribosomal_L7Ae"/>
    <property type="match status" value="1"/>
</dbReference>
<dbReference type="PRINTS" id="PR00881">
    <property type="entry name" value="L7ARS6FAMILY"/>
</dbReference>
<dbReference type="PRINTS" id="PR00883">
    <property type="entry name" value="NUCLEARHMG"/>
</dbReference>
<dbReference type="SUPFAM" id="SSF55315">
    <property type="entry name" value="L30e-like"/>
    <property type="match status" value="1"/>
</dbReference>
<dbReference type="PROSITE" id="PS01082">
    <property type="entry name" value="RIBOSOMAL_L7AE"/>
    <property type="match status" value="1"/>
</dbReference>
<reference key="1">
    <citation type="journal article" date="2004" name="Nature">
        <title>Genome evolution in yeasts.</title>
        <authorList>
            <person name="Dujon B."/>
            <person name="Sherman D."/>
            <person name="Fischer G."/>
            <person name="Durrens P."/>
            <person name="Casaregola S."/>
            <person name="Lafontaine I."/>
            <person name="de Montigny J."/>
            <person name="Marck C."/>
            <person name="Neuveglise C."/>
            <person name="Talla E."/>
            <person name="Goffard N."/>
            <person name="Frangeul L."/>
            <person name="Aigle M."/>
            <person name="Anthouard V."/>
            <person name="Babour A."/>
            <person name="Barbe V."/>
            <person name="Barnay S."/>
            <person name="Blanchin S."/>
            <person name="Beckerich J.-M."/>
            <person name="Beyne E."/>
            <person name="Bleykasten C."/>
            <person name="Boisrame A."/>
            <person name="Boyer J."/>
            <person name="Cattolico L."/>
            <person name="Confanioleri F."/>
            <person name="de Daruvar A."/>
            <person name="Despons L."/>
            <person name="Fabre E."/>
            <person name="Fairhead C."/>
            <person name="Ferry-Dumazet H."/>
            <person name="Groppi A."/>
            <person name="Hantraye F."/>
            <person name="Hennequin C."/>
            <person name="Jauniaux N."/>
            <person name="Joyet P."/>
            <person name="Kachouri R."/>
            <person name="Kerrest A."/>
            <person name="Koszul R."/>
            <person name="Lemaire M."/>
            <person name="Lesur I."/>
            <person name="Ma L."/>
            <person name="Muller H."/>
            <person name="Nicaud J.-M."/>
            <person name="Nikolski M."/>
            <person name="Oztas S."/>
            <person name="Ozier-Kalogeropoulos O."/>
            <person name="Pellenz S."/>
            <person name="Potier S."/>
            <person name="Richard G.-F."/>
            <person name="Straub M.-L."/>
            <person name="Suleau A."/>
            <person name="Swennen D."/>
            <person name="Tekaia F."/>
            <person name="Wesolowski-Louvel M."/>
            <person name="Westhof E."/>
            <person name="Wirth B."/>
            <person name="Zeniou-Meyer M."/>
            <person name="Zivanovic Y."/>
            <person name="Bolotin-Fukuhara M."/>
            <person name="Thierry A."/>
            <person name="Bouchier C."/>
            <person name="Caudron B."/>
            <person name="Scarpelli C."/>
            <person name="Gaillardin C."/>
            <person name="Weissenbach J."/>
            <person name="Wincker P."/>
            <person name="Souciet J.-L."/>
        </authorList>
    </citation>
    <scope>NUCLEOTIDE SEQUENCE [LARGE SCALE GENOMIC DNA]</scope>
    <source>
        <strain>ATCC 2001 / BCRC 20586 / JCM 3761 / NBRC 0622 / NRRL Y-65 / CBS 138</strain>
    </source>
</reference>
<sequence length="126" mass="13683">MSAPNPKAFPLADEKLSQQILDVVQQAANLRQLKKGANEATKTLNRGISEFIIMAADCEPIEILLHLPLLCEDKNVPYVFVPSRVALGRACGVSRPVIAASITTNDASAIKNQIYAVKDKIETLLI</sequence>
<comment type="function">
    <text evidence="1">Common component of the spliceosome and rRNA processing machinery. In association with the spliceosomal U4/U6.U5 tri-snRNP particle, required for splicing of pre-mRNA. In association with box C/D snoRNPs, required for processing of pre-ribosomal RNA (rRNA) and site-specific 2'-O-methylation of substrate RNAs. Essential for the accumulation and stability of U4 snRNA, U6 snRNA, and box C/D snoRNAs (By similarity).</text>
</comment>
<comment type="subunit">
    <text evidence="1">Component of the U3 snoRNP particle. Binds to the C'/D and B/C motifs in U3 snoRNA. Component of the 25S U4/U6.U5 tri-snRNP particle, a subcomplex of the spliceosome. Binds to the 5' stem-loop of U4 snRNA (By similarity).</text>
</comment>
<comment type="subcellular location">
    <subcellularLocation>
        <location evidence="1">Nucleus</location>
        <location evidence="1">Nucleolus</location>
    </subcellularLocation>
</comment>
<comment type="similarity">
    <text evidence="2">Belongs to the eukaryotic ribosomal protein eL8 family.</text>
</comment>
<organism>
    <name type="scientific">Candida glabrata (strain ATCC 2001 / BCRC 20586 / JCM 3761 / NBRC 0622 / NRRL Y-65 / CBS 138)</name>
    <name type="common">Yeast</name>
    <name type="synonym">Nakaseomyces glabratus</name>
    <dbReference type="NCBI Taxonomy" id="284593"/>
    <lineage>
        <taxon>Eukaryota</taxon>
        <taxon>Fungi</taxon>
        <taxon>Dikarya</taxon>
        <taxon>Ascomycota</taxon>
        <taxon>Saccharomycotina</taxon>
        <taxon>Saccharomycetes</taxon>
        <taxon>Saccharomycetales</taxon>
        <taxon>Saccharomycetaceae</taxon>
        <taxon>Nakaseomyces</taxon>
    </lineage>
</organism>
<proteinExistence type="inferred from homology"/>